<protein>
    <recommendedName>
        <fullName evidence="1">Triosephosphate isomerase</fullName>
        <shortName evidence="1">TIM</shortName>
        <shortName evidence="1">TPI</shortName>
        <ecNumber evidence="1">5.3.1.1</ecNumber>
    </recommendedName>
    <alternativeName>
        <fullName evidence="1">Triose-phosphate isomerase</fullName>
    </alternativeName>
</protein>
<evidence type="ECO:0000255" key="1">
    <source>
        <dbReference type="HAMAP-Rule" id="MF_00147"/>
    </source>
</evidence>
<proteinExistence type="inferred from homology"/>
<sequence>MALRRPMVAGNWKMNGNAALAQELFKKFASKLQNDSAEVVLCPPSIYLESVRQLLEDNKQALDGALVRMGAQNVSQHDFGAYTGEISGQMLKDSGCRYVIIGHSERRRMYGETSNIVAEKFAAAQKHGLTPILCVGESGPAREARRTFEVIAEELDIVIEKNGTMAFDNAIIAYEPLWAVGTGKSATPEQAQEVHAFIRKRLSEVSPFIGENVRILYGGSVTPSNAADLFAQPDVDGGLIGGASLNSSEFLSLCTIAMSA</sequence>
<reference key="1">
    <citation type="submission" date="2006-03" db="EMBL/GenBank/DDBJ databases">
        <title>Complete sequence of Shewanella denitrificans OS217.</title>
        <authorList>
            <consortium name="US DOE Joint Genome Institute"/>
            <person name="Copeland A."/>
            <person name="Lucas S."/>
            <person name="Lapidus A."/>
            <person name="Barry K."/>
            <person name="Detter J.C."/>
            <person name="Glavina del Rio T."/>
            <person name="Hammon N."/>
            <person name="Israni S."/>
            <person name="Dalin E."/>
            <person name="Tice H."/>
            <person name="Pitluck S."/>
            <person name="Brettin T."/>
            <person name="Bruce D."/>
            <person name="Han C."/>
            <person name="Tapia R."/>
            <person name="Gilna P."/>
            <person name="Kiss H."/>
            <person name="Schmutz J."/>
            <person name="Larimer F."/>
            <person name="Land M."/>
            <person name="Hauser L."/>
            <person name="Kyrpides N."/>
            <person name="Lykidis A."/>
            <person name="Richardson P."/>
        </authorList>
    </citation>
    <scope>NUCLEOTIDE SEQUENCE [LARGE SCALE GENOMIC DNA]</scope>
    <source>
        <strain>OS217 / ATCC BAA-1090 / DSM 15013</strain>
    </source>
</reference>
<name>TPIS_SHEDO</name>
<gene>
    <name evidence="1" type="primary">tpiA</name>
    <name type="ordered locus">Sden_1003</name>
</gene>
<organism>
    <name type="scientific">Shewanella denitrificans (strain OS217 / ATCC BAA-1090 / DSM 15013)</name>
    <dbReference type="NCBI Taxonomy" id="318161"/>
    <lineage>
        <taxon>Bacteria</taxon>
        <taxon>Pseudomonadati</taxon>
        <taxon>Pseudomonadota</taxon>
        <taxon>Gammaproteobacteria</taxon>
        <taxon>Alteromonadales</taxon>
        <taxon>Shewanellaceae</taxon>
        <taxon>Shewanella</taxon>
    </lineage>
</organism>
<comment type="function">
    <text evidence="1">Involved in the gluconeogenesis. Catalyzes stereospecifically the conversion of dihydroxyacetone phosphate (DHAP) to D-glyceraldehyde-3-phosphate (G3P).</text>
</comment>
<comment type="catalytic activity">
    <reaction evidence="1">
        <text>D-glyceraldehyde 3-phosphate = dihydroxyacetone phosphate</text>
        <dbReference type="Rhea" id="RHEA:18585"/>
        <dbReference type="ChEBI" id="CHEBI:57642"/>
        <dbReference type="ChEBI" id="CHEBI:59776"/>
        <dbReference type="EC" id="5.3.1.1"/>
    </reaction>
</comment>
<comment type="pathway">
    <text evidence="1">Carbohydrate biosynthesis; gluconeogenesis.</text>
</comment>
<comment type="pathway">
    <text evidence="1">Carbohydrate degradation; glycolysis; D-glyceraldehyde 3-phosphate from glycerone phosphate: step 1/1.</text>
</comment>
<comment type="subunit">
    <text evidence="1">Homodimer.</text>
</comment>
<comment type="subcellular location">
    <subcellularLocation>
        <location evidence="1">Cytoplasm</location>
    </subcellularLocation>
</comment>
<comment type="similarity">
    <text evidence="1">Belongs to the triosephosphate isomerase family.</text>
</comment>
<feature type="chain" id="PRO_0000307553" description="Triosephosphate isomerase">
    <location>
        <begin position="1"/>
        <end position="260"/>
    </location>
</feature>
<feature type="active site" description="Electrophile" evidence="1">
    <location>
        <position position="103"/>
    </location>
</feature>
<feature type="active site" description="Proton acceptor" evidence="1">
    <location>
        <position position="175"/>
    </location>
</feature>
<feature type="binding site" evidence="1">
    <location>
        <begin position="11"/>
        <end position="13"/>
    </location>
    <ligand>
        <name>substrate</name>
    </ligand>
</feature>
<feature type="binding site" evidence="1">
    <location>
        <position position="181"/>
    </location>
    <ligand>
        <name>substrate</name>
    </ligand>
</feature>
<feature type="binding site" evidence="1">
    <location>
        <position position="220"/>
    </location>
    <ligand>
        <name>substrate</name>
    </ligand>
</feature>
<feature type="binding site" evidence="1">
    <location>
        <begin position="241"/>
        <end position="242"/>
    </location>
    <ligand>
        <name>substrate</name>
    </ligand>
</feature>
<keyword id="KW-0963">Cytoplasm</keyword>
<keyword id="KW-0312">Gluconeogenesis</keyword>
<keyword id="KW-0324">Glycolysis</keyword>
<keyword id="KW-0413">Isomerase</keyword>
<keyword id="KW-1185">Reference proteome</keyword>
<dbReference type="EC" id="5.3.1.1" evidence="1"/>
<dbReference type="EMBL" id="CP000302">
    <property type="protein sequence ID" value="ABE54291.1"/>
    <property type="molecule type" value="Genomic_DNA"/>
</dbReference>
<dbReference type="RefSeq" id="WP_011495455.1">
    <property type="nucleotide sequence ID" value="NC_007954.1"/>
</dbReference>
<dbReference type="SMR" id="Q12QI5"/>
<dbReference type="STRING" id="318161.Sden_1003"/>
<dbReference type="KEGG" id="sdn:Sden_1003"/>
<dbReference type="eggNOG" id="COG0149">
    <property type="taxonomic scope" value="Bacteria"/>
</dbReference>
<dbReference type="HOGENOM" id="CLU_024251_2_1_6"/>
<dbReference type="OrthoDB" id="9809429at2"/>
<dbReference type="UniPathway" id="UPA00109">
    <property type="reaction ID" value="UER00189"/>
</dbReference>
<dbReference type="UniPathway" id="UPA00138"/>
<dbReference type="Proteomes" id="UP000001982">
    <property type="component" value="Chromosome"/>
</dbReference>
<dbReference type="GO" id="GO:0005829">
    <property type="term" value="C:cytosol"/>
    <property type="evidence" value="ECO:0007669"/>
    <property type="project" value="TreeGrafter"/>
</dbReference>
<dbReference type="GO" id="GO:0004807">
    <property type="term" value="F:triose-phosphate isomerase activity"/>
    <property type="evidence" value="ECO:0007669"/>
    <property type="project" value="UniProtKB-UniRule"/>
</dbReference>
<dbReference type="GO" id="GO:0006094">
    <property type="term" value="P:gluconeogenesis"/>
    <property type="evidence" value="ECO:0007669"/>
    <property type="project" value="UniProtKB-UniRule"/>
</dbReference>
<dbReference type="GO" id="GO:0046166">
    <property type="term" value="P:glyceraldehyde-3-phosphate biosynthetic process"/>
    <property type="evidence" value="ECO:0007669"/>
    <property type="project" value="TreeGrafter"/>
</dbReference>
<dbReference type="GO" id="GO:0019563">
    <property type="term" value="P:glycerol catabolic process"/>
    <property type="evidence" value="ECO:0007669"/>
    <property type="project" value="TreeGrafter"/>
</dbReference>
<dbReference type="GO" id="GO:0006096">
    <property type="term" value="P:glycolytic process"/>
    <property type="evidence" value="ECO:0007669"/>
    <property type="project" value="UniProtKB-UniRule"/>
</dbReference>
<dbReference type="CDD" id="cd00311">
    <property type="entry name" value="TIM"/>
    <property type="match status" value="1"/>
</dbReference>
<dbReference type="FunFam" id="3.20.20.70:FF:000016">
    <property type="entry name" value="Triosephosphate isomerase"/>
    <property type="match status" value="1"/>
</dbReference>
<dbReference type="Gene3D" id="3.20.20.70">
    <property type="entry name" value="Aldolase class I"/>
    <property type="match status" value="1"/>
</dbReference>
<dbReference type="HAMAP" id="MF_00147_B">
    <property type="entry name" value="TIM_B"/>
    <property type="match status" value="1"/>
</dbReference>
<dbReference type="InterPro" id="IPR013785">
    <property type="entry name" value="Aldolase_TIM"/>
</dbReference>
<dbReference type="InterPro" id="IPR035990">
    <property type="entry name" value="TIM_sf"/>
</dbReference>
<dbReference type="InterPro" id="IPR022896">
    <property type="entry name" value="TrioseP_Isoase_bac/euk"/>
</dbReference>
<dbReference type="InterPro" id="IPR000652">
    <property type="entry name" value="Triosephosphate_isomerase"/>
</dbReference>
<dbReference type="InterPro" id="IPR020861">
    <property type="entry name" value="Triosephosphate_isomerase_AS"/>
</dbReference>
<dbReference type="NCBIfam" id="TIGR00419">
    <property type="entry name" value="tim"/>
    <property type="match status" value="1"/>
</dbReference>
<dbReference type="PANTHER" id="PTHR21139">
    <property type="entry name" value="TRIOSEPHOSPHATE ISOMERASE"/>
    <property type="match status" value="1"/>
</dbReference>
<dbReference type="PANTHER" id="PTHR21139:SF42">
    <property type="entry name" value="TRIOSEPHOSPHATE ISOMERASE"/>
    <property type="match status" value="1"/>
</dbReference>
<dbReference type="Pfam" id="PF00121">
    <property type="entry name" value="TIM"/>
    <property type="match status" value="1"/>
</dbReference>
<dbReference type="SUPFAM" id="SSF51351">
    <property type="entry name" value="Triosephosphate isomerase (TIM)"/>
    <property type="match status" value="1"/>
</dbReference>
<dbReference type="PROSITE" id="PS00171">
    <property type="entry name" value="TIM_1"/>
    <property type="match status" value="1"/>
</dbReference>
<dbReference type="PROSITE" id="PS51440">
    <property type="entry name" value="TIM_2"/>
    <property type="match status" value="1"/>
</dbReference>
<accession>Q12QI5</accession>